<organismHost>
    <name type="scientific">Mus musculus</name>
    <name type="common">Mouse</name>
    <dbReference type="NCBI Taxonomy" id="10090"/>
</organismHost>
<keyword id="KW-0024">Alternative initiation</keyword>
<keyword id="KW-0025">Alternative splicing</keyword>
<keyword id="KW-0167">Capsid protein</keyword>
<keyword id="KW-1166">Caveolin-mediated endocytosis of virus by host</keyword>
<keyword id="KW-1015">Disulfide bond</keyword>
<keyword id="KW-1048">Host nucleus</keyword>
<keyword id="KW-0945">Host-virus interaction</keyword>
<keyword id="KW-0426">Late protein</keyword>
<keyword id="KW-0597">Phosphoprotein</keyword>
<keyword id="KW-1145">T=7 icosahedral capsid protein</keyword>
<keyword id="KW-1161">Viral attachment to host cell</keyword>
<keyword id="KW-1162">Viral penetration into host cytoplasm</keyword>
<keyword id="KW-0946">Virion</keyword>
<keyword id="KW-1164">Virus endocytosis by host</keyword>
<keyword id="KW-1160">Virus entry into host cell</keyword>
<protein>
    <recommendedName>
        <fullName>Major capsid protein VP1</fullName>
    </recommendedName>
    <alternativeName>
        <fullName>Major structural protein VP1</fullName>
    </alternativeName>
</protein>
<comment type="function">
    <text evidence="2 4">Forms an icosahedral capsid with a T=7 symmetry and a 40 nm diameter. The capsid is composed of 72 pentamers linked to each other by disulfide bonds and associated with VP2 or VP3 proteins. Interacts with terminal alpha(2,3)-linked sialic acids on the cell surface to provide virion attachment to target cell. This attachment induces virion internalization predominantly through caveolin-mediated endocytosis. Once attached, the virion is internalized by caveolin-mediated endocytosis and traffics to the endoplasmic reticulum. Inside the endoplasmic reticulum, the protein folding machinery isomerizes VP1 interpentamer disulfide bonds, thereby triggering initial uncoating. Next, the virion uses the endoplasmic reticulum-associated degradation machinery to probably translocate in the cytosol before reaching the nucleus. Nuclear entry of the viral DNA involves the selective exposure and importin recognition of VP2/Vp3 nuclear localization signal. In late phase of infection, neo-synthesized VP1 encapsulates replicated genomic DNA in the nucleus, and participates in rearranging nucleosomes around the viral DNA.</text>
</comment>
<comment type="subunit">
    <text evidence="2">Homomultimer; disulfide-linked. The virus capsid is composed of 72 icosahedral units, each one composed of five disulfide-linked copies of VP1. Interacts with minor capsid proteins VP2 and VP3.</text>
</comment>
<comment type="subcellular location">
    <subcellularLocation>
        <location>Virion</location>
    </subcellularLocation>
    <subcellularLocation>
        <location evidence="2">Host nucleus</location>
    </subcellularLocation>
</comment>
<comment type="alternative products">
    <event type="alternative splicing"/>
    <event type="alternative initiation"/>
    <isoform>
        <id>P12907-1</id>
        <name>VP1</name>
        <sequence type="displayed"/>
    </isoform>
    <isoform>
        <id>P12908-1</id>
        <name>VP2</name>
        <name>Minor capsid protein VP2</name>
        <sequence type="external"/>
    </isoform>
    <isoform>
        <id>P12908-2</id>
        <name>VP3</name>
        <name>Minor capsid protein VP3</name>
        <sequence type="external"/>
    </isoform>
</comment>
<comment type="domain">
    <text evidence="2">A DNA-binding domain overlapping a bipartite nuclear localization signal is present in the N-terminal region of the protein and is required for efficient virus formation.</text>
</comment>
<comment type="domain">
    <text evidence="2">The intrinsically disordered C-terminal arm interacts with neighboring pentamers. The unstructured nature of this region allows to make different interactions depending on the structural context: pentamers present at the 12 icosahedral fivefold axes bind five pentamers, whereas pentamers present at the 60 icosahedral six-fold axes interact with six pentamers.</text>
</comment>
<comment type="miscellaneous">
    <text>The virus attaches to the surface of cells by recognition of oligosaccharides terminating in alpha(2,3)-linked sialic acid. Strains that have Gly-92 (small-plaque strains) can also recognize branched oligosaccharides that carry a second alpha(2,6)-linked sialic acid.</text>
</comment>
<comment type="miscellaneous">
    <molecule>Isoform VP1</molecule>
    <text>Produced by alternative splicing of the late mRNA.</text>
</comment>
<comment type="similarity">
    <text evidence="3">Belongs to the polyomaviruses coat protein VP1 family.</text>
</comment>
<feature type="initiator methionine" description="Removed; by host" evidence="1">
    <location>
        <position position="1"/>
    </location>
</feature>
<feature type="chain" id="PRO_0000115026" description="Major capsid protein VP1">
    <location>
        <begin position="2"/>
        <end position="384"/>
    </location>
</feature>
<feature type="region of interest" description="C-terminal arm" evidence="2">
    <location>
        <begin position="322"/>
        <end position="384"/>
    </location>
</feature>
<feature type="short sequence motif" description="Bipartite nuclear localization signal" evidence="2">
    <location>
        <begin position="4"/>
        <end position="18"/>
    </location>
</feature>
<feature type="modified residue" description="Phosphothreonine; by host" evidence="1">
    <location>
        <position position="358"/>
    </location>
</feature>
<feature type="disulfide bond" description="Interchain (with C-12)" evidence="1">
    <location>
        <position position="12"/>
    </location>
</feature>
<feature type="disulfide bond" description="Interchain (with C-115)" evidence="1">
    <location>
        <position position="115"/>
    </location>
</feature>
<dbReference type="EMBL" id="K02737">
    <property type="status" value="NOT_ANNOTATED_CDS"/>
    <property type="molecule type" value="Genomic_DNA"/>
</dbReference>
<dbReference type="PIR" id="D28838">
    <property type="entry name" value="VVVPC1"/>
</dbReference>
<dbReference type="SMR" id="P12907"/>
<dbReference type="Proteomes" id="UP000008480">
    <property type="component" value="Segment"/>
</dbReference>
<dbReference type="GO" id="GO:0042025">
    <property type="term" value="C:host cell nucleus"/>
    <property type="evidence" value="ECO:0007669"/>
    <property type="project" value="UniProtKB-SubCell"/>
</dbReference>
<dbReference type="GO" id="GO:0039620">
    <property type="term" value="C:T=7 icosahedral viral capsid"/>
    <property type="evidence" value="ECO:0007669"/>
    <property type="project" value="UniProtKB-KW"/>
</dbReference>
<dbReference type="GO" id="GO:0005198">
    <property type="term" value="F:structural molecule activity"/>
    <property type="evidence" value="ECO:0007669"/>
    <property type="project" value="InterPro"/>
</dbReference>
<dbReference type="GO" id="GO:0075513">
    <property type="term" value="P:caveolin-mediated endocytosis of virus by host cell"/>
    <property type="evidence" value="ECO:0007669"/>
    <property type="project" value="UniProtKB-KW"/>
</dbReference>
<dbReference type="GO" id="GO:0019062">
    <property type="term" value="P:virion attachment to host cell"/>
    <property type="evidence" value="ECO:0007669"/>
    <property type="project" value="UniProtKB-KW"/>
</dbReference>
<dbReference type="Gene3D" id="2.60.175.10">
    <property type="entry name" value="Capsid protein VP1,Polyomavirus"/>
    <property type="match status" value="1"/>
</dbReference>
<dbReference type="InterPro" id="IPR000662">
    <property type="entry name" value="Capsid_VP1_Polyomavir"/>
</dbReference>
<dbReference type="InterPro" id="IPR011222">
    <property type="entry name" value="dsDNA_vir_gr_I_capsid"/>
</dbReference>
<dbReference type="InterPro" id="IPR036931">
    <property type="entry name" value="Polyomavir_VP1_sf"/>
</dbReference>
<dbReference type="Pfam" id="PF00718">
    <property type="entry name" value="Polyoma_coat"/>
    <property type="match status" value="1"/>
</dbReference>
<dbReference type="PIRSF" id="PIRSF003376">
    <property type="entry name" value="Capsid_VP1_Polyomavir"/>
    <property type="match status" value="1"/>
</dbReference>
<dbReference type="SUPFAM" id="SSF88648">
    <property type="entry name" value="Group I dsDNA viruses"/>
    <property type="match status" value="1"/>
</dbReference>
<organism>
    <name type="scientific">Murine polyomavirus (strain Crawford small-plaque)</name>
    <name type="common">MPyV</name>
    <dbReference type="NCBI Taxonomy" id="10637"/>
    <lineage>
        <taxon>Viruses</taxon>
        <taxon>Monodnaviria</taxon>
        <taxon>Shotokuvirae</taxon>
        <taxon>Cossaviricota</taxon>
        <taxon>Papovaviricetes</taxon>
        <taxon>Sepolyvirales</taxon>
        <taxon>Polyomaviridae</taxon>
        <taxon>Alphapolyomavirus</taxon>
        <taxon>Mus musculus polyomavirus 1</taxon>
    </lineage>
</organism>
<name>VP1_POVMC</name>
<proteinExistence type="inferred from homology"/>
<sequence>MAPKRKSGVSKCETKCTKACPRPAPVPKLLIKGGMEVLDLVTGPDSVTEIEAFLNPRMGQPPTPESLTEGGQYYGWSRGINLATSDTDDSPGNNTLPTWSMAKLQLPMLNEDLTCDTLQMWEAVSVKTEVVGSGSLLDVHGFNKPTDTVNTKGISTPVEGSQYHVFAVGGEPLDLQGLVTDARTKYKEEGVVTIKTITKKDMVNKDQVLNPISKAKLDKDGMYPVEIWHPDPAKNENTRYFGNYTGGTTAPPVLQFTNTLTTVLLDENGVGPLCKGEGVYLSCVDIMGWRITRNYDVHHWRGLPRYFKITLRKRWVKNPYPMASLISSLFNNMLPQVQGQPMEGENTQVEEVRVYDGTEPVPGDPDMTRYVDRFGKTKTVFPGN</sequence>
<reference key="1">
    <citation type="journal article" date="1983" name="J. Virol.">
        <title>Comparison of the DNA sequence of the Crawford small-plaque variant of polyomavirus with those of polyomaviruses A2 and strain 3.</title>
        <authorList>
            <person name="Rothwell V.M."/>
            <person name="Folk W.R."/>
        </authorList>
    </citation>
    <scope>NUCLEOTIDE SEQUENCE [GENOMIC DNA]</scope>
</reference>
<reference key="2">
    <citation type="submission" date="1985-11" db="EMBL/GenBank/DDBJ databases">
        <authorList>
            <person name="Rothwell V.M."/>
        </authorList>
    </citation>
    <scope>SEQUENCE REVISION</scope>
</reference>
<reference key="3">
    <citation type="journal article" date="2009" name="Virology">
        <title>The Polyomaviridae: Contributions of virus structure to our understanding of virus receptors and infectious entry.</title>
        <authorList>
            <person name="Neu U."/>
            <person name="Stehle T."/>
            <person name="Atwood W.J."/>
        </authorList>
    </citation>
    <scope>REVIEW</scope>
</reference>
<evidence type="ECO:0000250" key="1"/>
<evidence type="ECO:0000250" key="2">
    <source>
        <dbReference type="UniProtKB" id="P03087"/>
    </source>
</evidence>
<evidence type="ECO:0000305" key="3"/>
<evidence type="ECO:0000305" key="4">
    <source>
    </source>
</evidence>
<accession>P12907</accession>